<accession>Q50299</accession>
<sequence length="215" mass="24255">MVMENKFLFLGAPGVGKGTLAKQVANTTGLFHLSTGDIFRSVMQEQGALSQTLAHYMNQGLYVPDELTNQTFWHFVTTHQNELHKGFILDGYPRTLNQLEFLQSKLQLDQVFHLKLSDPQVLVARILNRLVCPSCGSVYNKQSKPPLKANQCDRCHATLQARNDDTEAVILKRLTLYEDTVKPLIEAFTKQGILTVIEAQLPLEQQVNLVQQLVH</sequence>
<name>KAD_MYCPN</name>
<organism>
    <name type="scientific">Mycoplasma pneumoniae (strain ATCC 29342 / M129 / Subtype 1)</name>
    <name type="common">Mycoplasmoides pneumoniae</name>
    <dbReference type="NCBI Taxonomy" id="272634"/>
    <lineage>
        <taxon>Bacteria</taxon>
        <taxon>Bacillati</taxon>
        <taxon>Mycoplasmatota</taxon>
        <taxon>Mycoplasmoidales</taxon>
        <taxon>Mycoplasmoidaceae</taxon>
        <taxon>Mycoplasmoides</taxon>
    </lineage>
</organism>
<dbReference type="EC" id="2.7.4.3" evidence="1"/>
<dbReference type="EMBL" id="U34795">
    <property type="protein sequence ID" value="AAC43696.1"/>
    <property type="molecule type" value="Genomic_DNA"/>
</dbReference>
<dbReference type="EMBL" id="U00089">
    <property type="protein sequence ID" value="AAB96294.1"/>
    <property type="molecule type" value="Genomic_DNA"/>
</dbReference>
<dbReference type="PIR" id="S62823">
    <property type="entry name" value="S62823"/>
</dbReference>
<dbReference type="RefSeq" id="NP_109873.1">
    <property type="nucleotide sequence ID" value="NC_000912.1"/>
</dbReference>
<dbReference type="RefSeq" id="WP_010874542.1">
    <property type="nucleotide sequence ID" value="NZ_OU342337.1"/>
</dbReference>
<dbReference type="SMR" id="Q50299"/>
<dbReference type="IntAct" id="Q50299">
    <property type="interactions" value="1"/>
</dbReference>
<dbReference type="STRING" id="272634.MPN_185"/>
<dbReference type="EnsemblBacteria" id="AAB96294">
    <property type="protein sequence ID" value="AAB96294"/>
    <property type="gene ID" value="MPN_185"/>
</dbReference>
<dbReference type="KEGG" id="mpn:MPN_185"/>
<dbReference type="PATRIC" id="fig|272634.6.peg.203"/>
<dbReference type="HOGENOM" id="CLU_032354_1_2_14"/>
<dbReference type="OrthoDB" id="9805030at2"/>
<dbReference type="BioCyc" id="MPNE272634:G1GJ3-298-MONOMER"/>
<dbReference type="UniPathway" id="UPA00588">
    <property type="reaction ID" value="UER00649"/>
</dbReference>
<dbReference type="Proteomes" id="UP000000808">
    <property type="component" value="Chromosome"/>
</dbReference>
<dbReference type="GO" id="GO:0005737">
    <property type="term" value="C:cytoplasm"/>
    <property type="evidence" value="ECO:0007669"/>
    <property type="project" value="UniProtKB-SubCell"/>
</dbReference>
<dbReference type="GO" id="GO:0004017">
    <property type="term" value="F:adenylate kinase activity"/>
    <property type="evidence" value="ECO:0007669"/>
    <property type="project" value="UniProtKB-UniRule"/>
</dbReference>
<dbReference type="GO" id="GO:0005524">
    <property type="term" value="F:ATP binding"/>
    <property type="evidence" value="ECO:0007669"/>
    <property type="project" value="UniProtKB-UniRule"/>
</dbReference>
<dbReference type="GO" id="GO:0008270">
    <property type="term" value="F:zinc ion binding"/>
    <property type="evidence" value="ECO:0007669"/>
    <property type="project" value="UniProtKB-UniRule"/>
</dbReference>
<dbReference type="GO" id="GO:0044209">
    <property type="term" value="P:AMP salvage"/>
    <property type="evidence" value="ECO:0007669"/>
    <property type="project" value="UniProtKB-UniRule"/>
</dbReference>
<dbReference type="CDD" id="cd01428">
    <property type="entry name" value="ADK"/>
    <property type="match status" value="1"/>
</dbReference>
<dbReference type="Gene3D" id="3.40.50.300">
    <property type="entry name" value="P-loop containing nucleotide triphosphate hydrolases"/>
    <property type="match status" value="1"/>
</dbReference>
<dbReference type="HAMAP" id="MF_00235">
    <property type="entry name" value="Adenylate_kinase_Adk"/>
    <property type="match status" value="1"/>
</dbReference>
<dbReference type="InterPro" id="IPR006259">
    <property type="entry name" value="Adenyl_kin_sub"/>
</dbReference>
<dbReference type="InterPro" id="IPR000850">
    <property type="entry name" value="Adenylat/UMP-CMP_kin"/>
</dbReference>
<dbReference type="InterPro" id="IPR033690">
    <property type="entry name" value="Adenylat_kinase_CS"/>
</dbReference>
<dbReference type="InterPro" id="IPR007862">
    <property type="entry name" value="Adenylate_kinase_lid-dom"/>
</dbReference>
<dbReference type="InterPro" id="IPR036193">
    <property type="entry name" value="ADK_active_lid_dom_sf"/>
</dbReference>
<dbReference type="InterPro" id="IPR027417">
    <property type="entry name" value="P-loop_NTPase"/>
</dbReference>
<dbReference type="NCBIfam" id="TIGR01351">
    <property type="entry name" value="adk"/>
    <property type="match status" value="1"/>
</dbReference>
<dbReference type="PANTHER" id="PTHR23359">
    <property type="entry name" value="NUCLEOTIDE KINASE"/>
    <property type="match status" value="1"/>
</dbReference>
<dbReference type="Pfam" id="PF00406">
    <property type="entry name" value="ADK"/>
    <property type="match status" value="1"/>
</dbReference>
<dbReference type="Pfam" id="PF05191">
    <property type="entry name" value="ADK_lid"/>
    <property type="match status" value="1"/>
</dbReference>
<dbReference type="PRINTS" id="PR00094">
    <property type="entry name" value="ADENYLTKNASE"/>
</dbReference>
<dbReference type="SUPFAM" id="SSF57774">
    <property type="entry name" value="Microbial and mitochondrial ADK, insert 'zinc finger' domain"/>
    <property type="match status" value="1"/>
</dbReference>
<dbReference type="SUPFAM" id="SSF52540">
    <property type="entry name" value="P-loop containing nucleoside triphosphate hydrolases"/>
    <property type="match status" value="1"/>
</dbReference>
<dbReference type="PROSITE" id="PS00113">
    <property type="entry name" value="ADENYLATE_KINASE"/>
    <property type="match status" value="1"/>
</dbReference>
<feature type="chain" id="PRO_0000158804" description="Adenylate kinase">
    <location>
        <begin position="1"/>
        <end position="215"/>
    </location>
</feature>
<feature type="region of interest" description="NMP" evidence="1">
    <location>
        <begin position="34"/>
        <end position="63"/>
    </location>
</feature>
<feature type="region of interest" description="LID" evidence="1">
    <location>
        <begin position="128"/>
        <end position="165"/>
    </location>
</feature>
<feature type="binding site" evidence="1">
    <location>
        <begin position="14"/>
        <end position="19"/>
    </location>
    <ligand>
        <name>ATP</name>
        <dbReference type="ChEBI" id="CHEBI:30616"/>
    </ligand>
</feature>
<feature type="binding site" evidence="1">
    <location>
        <position position="35"/>
    </location>
    <ligand>
        <name>AMP</name>
        <dbReference type="ChEBI" id="CHEBI:456215"/>
    </ligand>
</feature>
<feature type="binding site" evidence="1">
    <location>
        <position position="40"/>
    </location>
    <ligand>
        <name>AMP</name>
        <dbReference type="ChEBI" id="CHEBI:456215"/>
    </ligand>
</feature>
<feature type="binding site" evidence="1">
    <location>
        <begin position="61"/>
        <end position="63"/>
    </location>
    <ligand>
        <name>AMP</name>
        <dbReference type="ChEBI" id="CHEBI:456215"/>
    </ligand>
</feature>
<feature type="binding site" evidence="1">
    <location>
        <begin position="91"/>
        <end position="94"/>
    </location>
    <ligand>
        <name>AMP</name>
        <dbReference type="ChEBI" id="CHEBI:456215"/>
    </ligand>
</feature>
<feature type="binding site" evidence="1">
    <location>
        <position position="98"/>
    </location>
    <ligand>
        <name>AMP</name>
        <dbReference type="ChEBI" id="CHEBI:456215"/>
    </ligand>
</feature>
<feature type="binding site" evidence="1">
    <location>
        <position position="129"/>
    </location>
    <ligand>
        <name>ATP</name>
        <dbReference type="ChEBI" id="CHEBI:30616"/>
    </ligand>
</feature>
<feature type="binding site" evidence="1">
    <location>
        <position position="132"/>
    </location>
    <ligand>
        <name>Zn(2+)</name>
        <dbReference type="ChEBI" id="CHEBI:29105"/>
        <note>structural</note>
    </ligand>
</feature>
<feature type="binding site" evidence="1">
    <location>
        <position position="135"/>
    </location>
    <ligand>
        <name>Zn(2+)</name>
        <dbReference type="ChEBI" id="CHEBI:29105"/>
        <note>structural</note>
    </ligand>
</feature>
<feature type="binding site" evidence="1">
    <location>
        <begin position="138"/>
        <end position="139"/>
    </location>
    <ligand>
        <name>ATP</name>
        <dbReference type="ChEBI" id="CHEBI:30616"/>
    </ligand>
</feature>
<feature type="binding site" evidence="1">
    <location>
        <position position="152"/>
    </location>
    <ligand>
        <name>Zn(2+)</name>
        <dbReference type="ChEBI" id="CHEBI:29105"/>
        <note>structural</note>
    </ligand>
</feature>
<feature type="binding site" evidence="1">
    <location>
        <position position="155"/>
    </location>
    <ligand>
        <name>Zn(2+)</name>
        <dbReference type="ChEBI" id="CHEBI:29105"/>
        <note>structural</note>
    </ligand>
</feature>
<feature type="binding site" evidence="1">
    <location>
        <position position="162"/>
    </location>
    <ligand>
        <name>AMP</name>
        <dbReference type="ChEBI" id="CHEBI:456215"/>
    </ligand>
</feature>
<feature type="binding site" evidence="1">
    <location>
        <position position="173"/>
    </location>
    <ligand>
        <name>AMP</name>
        <dbReference type="ChEBI" id="CHEBI:456215"/>
    </ligand>
</feature>
<feature type="binding site" evidence="1">
    <location>
        <position position="211"/>
    </location>
    <ligand>
        <name>ATP</name>
        <dbReference type="ChEBI" id="CHEBI:30616"/>
    </ligand>
</feature>
<evidence type="ECO:0000255" key="1">
    <source>
        <dbReference type="HAMAP-Rule" id="MF_00235"/>
    </source>
</evidence>
<protein>
    <recommendedName>
        <fullName evidence="1">Adenylate kinase</fullName>
        <shortName evidence="1">AK</shortName>
        <ecNumber evidence="1">2.7.4.3</ecNumber>
    </recommendedName>
    <alternativeName>
        <fullName evidence="1">ATP-AMP transphosphorylase</fullName>
    </alternativeName>
    <alternativeName>
        <fullName evidence="1">ATP:AMP phosphotransferase</fullName>
    </alternativeName>
    <alternativeName>
        <fullName evidence="1">Adenylate monophosphate kinase</fullName>
    </alternativeName>
</protein>
<keyword id="KW-0067">ATP-binding</keyword>
<keyword id="KW-0963">Cytoplasm</keyword>
<keyword id="KW-0418">Kinase</keyword>
<keyword id="KW-0479">Metal-binding</keyword>
<keyword id="KW-0545">Nucleotide biosynthesis</keyword>
<keyword id="KW-0547">Nucleotide-binding</keyword>
<keyword id="KW-1185">Reference proteome</keyword>
<keyword id="KW-0808">Transferase</keyword>
<keyword id="KW-0862">Zinc</keyword>
<reference key="1">
    <citation type="journal article" date="1996" name="Nucleic Acids Res.">
        <title>Sequence analysis of 56 kb from the genome of the bacterium Mycoplasma pneumoniae comprising the dnaA region, the atp operon and a cluster of ribosomal protein genes.</title>
        <authorList>
            <person name="Hilbert H."/>
            <person name="Himmelreich R."/>
            <person name="Plagens H."/>
            <person name="Herrmann R."/>
        </authorList>
    </citation>
    <scope>NUCLEOTIDE SEQUENCE [GENOMIC DNA]</scope>
    <source>
        <strain>ATCC 29342 / M129 / Subtype 1</strain>
    </source>
</reference>
<reference key="2">
    <citation type="journal article" date="1996" name="Nucleic Acids Res.">
        <title>Complete sequence analysis of the genome of the bacterium Mycoplasma pneumoniae.</title>
        <authorList>
            <person name="Himmelreich R."/>
            <person name="Hilbert H."/>
            <person name="Plagens H."/>
            <person name="Pirkl E."/>
            <person name="Li B.-C."/>
            <person name="Herrmann R."/>
        </authorList>
    </citation>
    <scope>NUCLEOTIDE SEQUENCE [LARGE SCALE GENOMIC DNA]</scope>
    <source>
        <strain>ATCC 29342 / M129 / Subtype 1</strain>
    </source>
</reference>
<proteinExistence type="inferred from homology"/>
<comment type="function">
    <text evidence="1">Catalyzes the reversible transfer of the terminal phosphate group between ATP and AMP. Plays an important role in cellular energy homeostasis and in adenine nucleotide metabolism.</text>
</comment>
<comment type="catalytic activity">
    <reaction evidence="1">
        <text>AMP + ATP = 2 ADP</text>
        <dbReference type="Rhea" id="RHEA:12973"/>
        <dbReference type="ChEBI" id="CHEBI:30616"/>
        <dbReference type="ChEBI" id="CHEBI:456215"/>
        <dbReference type="ChEBI" id="CHEBI:456216"/>
        <dbReference type="EC" id="2.7.4.3"/>
    </reaction>
</comment>
<comment type="pathway">
    <text evidence="1">Purine metabolism; AMP biosynthesis via salvage pathway; AMP from ADP: step 1/1.</text>
</comment>
<comment type="subunit">
    <text evidence="1">Monomer.</text>
</comment>
<comment type="subcellular location">
    <subcellularLocation>
        <location>Cytoplasm</location>
    </subcellularLocation>
</comment>
<comment type="domain">
    <text evidence="1">Consists of three domains, a large central CORE domain and two small peripheral domains, NMPbind and LID, which undergo movements during catalysis. The LID domain closes over the site of phosphoryl transfer upon ATP binding. Assembling and dissambling the active center during each catalytic cycle provides an effective means to prevent ATP hydrolysis. Some bacteria have evolved a zinc-coordinating structure that stabilizes the LID domain.</text>
</comment>
<comment type="similarity">
    <text evidence="1">Belongs to the adenylate kinase family.</text>
</comment>
<gene>
    <name evidence="1" type="primary">adk</name>
    <name type="ordered locus">MPN_185</name>
    <name type="ORF">MP646</name>
</gene>